<name>RNH_ERYLH</name>
<evidence type="ECO:0000255" key="1">
    <source>
        <dbReference type="HAMAP-Rule" id="MF_00042"/>
    </source>
</evidence>
<evidence type="ECO:0000255" key="2">
    <source>
        <dbReference type="PROSITE-ProRule" id="PRU00408"/>
    </source>
</evidence>
<proteinExistence type="inferred from homology"/>
<sequence>MKKVEIFTDGACKGNPGPGGWGVLLRMGKHEKELSGGEPETTNNRMELRAAIEGLNALIEPCEVELYTDSKYVVDGITKWVHGWKKRGWVNASKKPVRNDDLWHDLIEAELRHKVTWHWVKGHNGHAENERADRLASEAADLQS</sequence>
<comment type="function">
    <text evidence="1">Endonuclease that specifically degrades the RNA of RNA-DNA hybrids.</text>
</comment>
<comment type="catalytic activity">
    <reaction evidence="1">
        <text>Endonucleolytic cleavage to 5'-phosphomonoester.</text>
        <dbReference type="EC" id="3.1.26.4"/>
    </reaction>
</comment>
<comment type="cofactor">
    <cofactor evidence="1">
        <name>Mg(2+)</name>
        <dbReference type="ChEBI" id="CHEBI:18420"/>
    </cofactor>
    <text evidence="1">Binds 1 Mg(2+) ion per subunit. May bind a second metal ion at a regulatory site, or after substrate binding.</text>
</comment>
<comment type="subunit">
    <text evidence="1">Monomer.</text>
</comment>
<comment type="subcellular location">
    <subcellularLocation>
        <location evidence="1">Cytoplasm</location>
    </subcellularLocation>
</comment>
<comment type="similarity">
    <text evidence="1">Belongs to the RNase H family.</text>
</comment>
<organism>
    <name type="scientific">Erythrobacter litoralis (strain HTCC2594)</name>
    <dbReference type="NCBI Taxonomy" id="314225"/>
    <lineage>
        <taxon>Bacteria</taxon>
        <taxon>Pseudomonadati</taxon>
        <taxon>Pseudomonadota</taxon>
        <taxon>Alphaproteobacteria</taxon>
        <taxon>Sphingomonadales</taxon>
        <taxon>Erythrobacteraceae</taxon>
        <taxon>Erythrobacter/Porphyrobacter group</taxon>
        <taxon>Erythrobacter</taxon>
    </lineage>
</organism>
<gene>
    <name evidence="1" type="primary">rnhA</name>
    <name type="ordered locus">ELI_01550</name>
</gene>
<dbReference type="EC" id="3.1.26.4" evidence="1"/>
<dbReference type="EMBL" id="CP000157">
    <property type="protein sequence ID" value="ABC62402.1"/>
    <property type="molecule type" value="Genomic_DNA"/>
</dbReference>
<dbReference type="RefSeq" id="WP_011413278.1">
    <property type="nucleotide sequence ID" value="NC_007722.1"/>
</dbReference>
<dbReference type="SMR" id="Q2ND39"/>
<dbReference type="STRING" id="314225.ELI_01550"/>
<dbReference type="KEGG" id="eli:ELI_01550"/>
<dbReference type="eggNOG" id="COG0328">
    <property type="taxonomic scope" value="Bacteria"/>
</dbReference>
<dbReference type="HOGENOM" id="CLU_030894_6_0_5"/>
<dbReference type="OrthoDB" id="7845843at2"/>
<dbReference type="Proteomes" id="UP000008808">
    <property type="component" value="Chromosome"/>
</dbReference>
<dbReference type="GO" id="GO:0005737">
    <property type="term" value="C:cytoplasm"/>
    <property type="evidence" value="ECO:0007669"/>
    <property type="project" value="UniProtKB-SubCell"/>
</dbReference>
<dbReference type="GO" id="GO:0000287">
    <property type="term" value="F:magnesium ion binding"/>
    <property type="evidence" value="ECO:0007669"/>
    <property type="project" value="UniProtKB-UniRule"/>
</dbReference>
<dbReference type="GO" id="GO:0003676">
    <property type="term" value="F:nucleic acid binding"/>
    <property type="evidence" value="ECO:0007669"/>
    <property type="project" value="InterPro"/>
</dbReference>
<dbReference type="GO" id="GO:0004523">
    <property type="term" value="F:RNA-DNA hybrid ribonuclease activity"/>
    <property type="evidence" value="ECO:0007669"/>
    <property type="project" value="UniProtKB-UniRule"/>
</dbReference>
<dbReference type="GO" id="GO:0043137">
    <property type="term" value="P:DNA replication, removal of RNA primer"/>
    <property type="evidence" value="ECO:0007669"/>
    <property type="project" value="TreeGrafter"/>
</dbReference>
<dbReference type="CDD" id="cd09278">
    <property type="entry name" value="RNase_HI_prokaryote_like"/>
    <property type="match status" value="1"/>
</dbReference>
<dbReference type="FunFam" id="3.30.420.10:FF:000089">
    <property type="entry name" value="Ribonuclease H"/>
    <property type="match status" value="1"/>
</dbReference>
<dbReference type="Gene3D" id="3.30.420.10">
    <property type="entry name" value="Ribonuclease H-like superfamily/Ribonuclease H"/>
    <property type="match status" value="1"/>
</dbReference>
<dbReference type="HAMAP" id="MF_00042">
    <property type="entry name" value="RNase_H"/>
    <property type="match status" value="1"/>
</dbReference>
<dbReference type="InterPro" id="IPR050092">
    <property type="entry name" value="RNase_H"/>
</dbReference>
<dbReference type="InterPro" id="IPR012337">
    <property type="entry name" value="RNaseH-like_sf"/>
</dbReference>
<dbReference type="InterPro" id="IPR002156">
    <property type="entry name" value="RNaseH_domain"/>
</dbReference>
<dbReference type="InterPro" id="IPR036397">
    <property type="entry name" value="RNaseH_sf"/>
</dbReference>
<dbReference type="InterPro" id="IPR022892">
    <property type="entry name" value="RNaseHI"/>
</dbReference>
<dbReference type="NCBIfam" id="NF001236">
    <property type="entry name" value="PRK00203.1"/>
    <property type="match status" value="1"/>
</dbReference>
<dbReference type="PANTHER" id="PTHR10642">
    <property type="entry name" value="RIBONUCLEASE H1"/>
    <property type="match status" value="1"/>
</dbReference>
<dbReference type="PANTHER" id="PTHR10642:SF26">
    <property type="entry name" value="RIBONUCLEASE H1"/>
    <property type="match status" value="1"/>
</dbReference>
<dbReference type="Pfam" id="PF00075">
    <property type="entry name" value="RNase_H"/>
    <property type="match status" value="1"/>
</dbReference>
<dbReference type="SUPFAM" id="SSF53098">
    <property type="entry name" value="Ribonuclease H-like"/>
    <property type="match status" value="1"/>
</dbReference>
<dbReference type="PROSITE" id="PS50879">
    <property type="entry name" value="RNASE_H_1"/>
    <property type="match status" value="1"/>
</dbReference>
<reference key="1">
    <citation type="journal article" date="2009" name="J. Bacteriol.">
        <title>Complete genome sequence of Erythrobacter litoralis HTCC2594.</title>
        <authorList>
            <person name="Oh H.M."/>
            <person name="Giovannoni S.J."/>
            <person name="Ferriera S."/>
            <person name="Johnson J."/>
            <person name="Cho J.C."/>
        </authorList>
    </citation>
    <scope>NUCLEOTIDE SEQUENCE [LARGE SCALE GENOMIC DNA]</scope>
    <source>
        <strain>HTCC2594</strain>
    </source>
</reference>
<keyword id="KW-0963">Cytoplasm</keyword>
<keyword id="KW-0255">Endonuclease</keyword>
<keyword id="KW-0378">Hydrolase</keyword>
<keyword id="KW-0460">Magnesium</keyword>
<keyword id="KW-0479">Metal-binding</keyword>
<keyword id="KW-0540">Nuclease</keyword>
<keyword id="KW-1185">Reference proteome</keyword>
<accession>Q2ND39</accession>
<protein>
    <recommendedName>
        <fullName evidence="1">Ribonuclease H</fullName>
        <shortName evidence="1">RNase H</shortName>
        <ecNumber evidence="1">3.1.26.4</ecNumber>
    </recommendedName>
</protein>
<feature type="chain" id="PRO_0000332597" description="Ribonuclease H">
    <location>
        <begin position="1"/>
        <end position="144"/>
    </location>
</feature>
<feature type="domain" description="RNase H type-1" evidence="2">
    <location>
        <begin position="1"/>
        <end position="141"/>
    </location>
</feature>
<feature type="binding site" evidence="1">
    <location>
        <position position="9"/>
    </location>
    <ligand>
        <name>Mg(2+)</name>
        <dbReference type="ChEBI" id="CHEBI:18420"/>
        <label>1</label>
    </ligand>
</feature>
<feature type="binding site" evidence="1">
    <location>
        <position position="9"/>
    </location>
    <ligand>
        <name>Mg(2+)</name>
        <dbReference type="ChEBI" id="CHEBI:18420"/>
        <label>2</label>
    </ligand>
</feature>
<feature type="binding site" evidence="1">
    <location>
        <position position="47"/>
    </location>
    <ligand>
        <name>Mg(2+)</name>
        <dbReference type="ChEBI" id="CHEBI:18420"/>
        <label>1</label>
    </ligand>
</feature>
<feature type="binding site" evidence="1">
    <location>
        <position position="69"/>
    </location>
    <ligand>
        <name>Mg(2+)</name>
        <dbReference type="ChEBI" id="CHEBI:18420"/>
        <label>1</label>
    </ligand>
</feature>
<feature type="binding site" evidence="1">
    <location>
        <position position="133"/>
    </location>
    <ligand>
        <name>Mg(2+)</name>
        <dbReference type="ChEBI" id="CHEBI:18420"/>
        <label>2</label>
    </ligand>
</feature>